<sequence>MATDGASCEPNFSRAPEDVGATAEAAVATKEFDVDTLSKSELRMLLSVMEGELEARDLVIEALRARRKEVFIQERYGRFNLNDPFLALQRDYEAGAGEKEKKPVCTNPLSILEAVMAHCRKMQERMSTQLAAAESRQKKLEMEKLQLQALEQEHKKLATRLEEERGKNKHVVLMLVKECKQLSGKVIEEAQKLEEVMTKLEEEKKKTNELEEELSAEKRRSTEMEAQLEKQLSEFDIEREQLRAKLNREEAHTTDLKEEIDKMKKMIEQLKRGNDSKPSLSLPRKTKDRRLVSISVGTEGPVTRSVACQTDLVIESTDHVKKLPLTVPVKPSTGSPLVSAPAKGNVCPSVPLLRPGIDRQASHGDLIVSSVPAVPPPNANRIEENGPSIGSTPDLASSTPPLPSNAAPPTGQTSGIASQNYSQASSMHSLHSPCANASLHPGPNPRIQAARFRFQGNANDQDQNGNTTQSPPSRDVSPTSRDNLVAKQLARNTVTQALSRFTSPQASASPRPGAPPTGDIGTHPAVSRTSLKTPGLARVDRGNPPPIPPKKPGLSQAPSPPHPQLKAIMDSSRASNAGAKVDNKTVASPPASLPQGNRVINEENLPKSSSPQLPPKPSIDLTVAPAGCAVSALATSQVGARPAETPGPTQPACSDSSLVIPTTIAFRSSINPVSASASRPGASDSLLVTASGWSPSLTPLLMSGGPAPLAGRPTLLQQAAAQGNVTLLSMLLNEEGLDINYSCEDGHSALYSAAKNGHTDCVRLLLNAKAQIDAADKNGFTPLCAAAAQGHFECVELLIAYHANIDHAADGGQTPLYLACKNGNKECIKVLLEAGTDRSVKTRDGWTPVHAAVDTGNVDSLKLLMYHRAPTLGHSLNEEEPEPGAFDLDQGQEGSEGTAKPVVPTDLINHANREGWTAAHIAASKGFKNCLEILCRHGGLEPERKDKCNRTVHDVATDDCKHLLENLNALKIPLRISVGETQPGSYGCDDFECENTICALNIHKQTSWDDFSKAVSQALTNHFQAISSDGWWSLEDMTFNNTPEPSIGLSARSILSITLGNVPWSAGQCFTQAPWDFMRKNKAEQVTVLLSGPQEGCLNSVTYASMIPLQMLQNYLRLVEQYHNVIFHGPEGSLQDYIAHQLALCMKHRQMAAGFSCEIVRAEVDAGFSKEQLIDLFINSACLIPVKQSPVTKKIIIILENLEKSSLSELLGDFLAPLENRSTESPCTFQKGNGTSECYYFHENCFLMGTIAKTCLQGSDLLVQQHFRWVQLRWDGEPMHGLLQRFLRRKVVNKFRGQAPSPCDPVCKMVDWALAVWHQLNSCLARLGTPDALLGPKYFLSCPVVPGHAQVTVKWMSKLWNAIIAPKVQEAILSRASVKRQPGLRQTTAKKPPSQGQQAVVKAALSILLNKAVLHGCPLLRAELDQYITDFKGGSFPLSIVSSYNSCSKKKGENGAWRKVSTNPRKKSGRFSSPTWSKPDLGEEGTKNKTMSQPNCNRIASLSKQKSSENDPSSMLNLDQRLSLGSDDEADLVKELQSMCSSKSESDISKIADSRDDLRRFDSSENSPAFSAAINNLRMPVSQKEVSPVSSHQTTKRSTSTSKTELSVSRVKSFLPVPRSKVSQCSQNTKRSSSSSNTRQTELNNNSKEEIWNLCKNEQVQKPNK</sequence>
<evidence type="ECO:0000250" key="1">
    <source>
        <dbReference type="UniProtKB" id="B9EJA2"/>
    </source>
</evidence>
<evidence type="ECO:0000250" key="2">
    <source>
        <dbReference type="UniProtKB" id="Q2IBD4"/>
    </source>
</evidence>
<evidence type="ECO:0000250" key="3">
    <source>
        <dbReference type="UniProtKB" id="Q8WZ74"/>
    </source>
</evidence>
<evidence type="ECO:0000255" key="4"/>
<evidence type="ECO:0000256" key="5">
    <source>
        <dbReference type="SAM" id="MobiDB-lite"/>
    </source>
</evidence>
<accession>Q07E41</accession>
<organism>
    <name type="scientific">Dasypus novemcinctus</name>
    <name type="common">Nine-banded armadillo</name>
    <dbReference type="NCBI Taxonomy" id="9361"/>
    <lineage>
        <taxon>Eukaryota</taxon>
        <taxon>Metazoa</taxon>
        <taxon>Chordata</taxon>
        <taxon>Craniata</taxon>
        <taxon>Vertebrata</taxon>
        <taxon>Euteleostomi</taxon>
        <taxon>Mammalia</taxon>
        <taxon>Eutheria</taxon>
        <taxon>Xenarthra</taxon>
        <taxon>Cingulata</taxon>
        <taxon>Dasypodidae</taxon>
        <taxon>Dasypus</taxon>
    </lineage>
</organism>
<proteinExistence type="inferred from homology"/>
<dbReference type="EMBL" id="DP000181">
    <property type="protein sequence ID" value="ABI93635.1"/>
    <property type="molecule type" value="Genomic_DNA"/>
</dbReference>
<dbReference type="SMR" id="Q07E41"/>
<dbReference type="GO" id="GO:0015629">
    <property type="term" value="C:actin cytoskeleton"/>
    <property type="evidence" value="ECO:0007669"/>
    <property type="project" value="TreeGrafter"/>
</dbReference>
<dbReference type="GO" id="GO:0005938">
    <property type="term" value="C:cell cortex"/>
    <property type="evidence" value="ECO:0007669"/>
    <property type="project" value="UniProtKB-SubCell"/>
</dbReference>
<dbReference type="GO" id="GO:0043197">
    <property type="term" value="C:dendritic spine"/>
    <property type="evidence" value="ECO:0000250"/>
    <property type="project" value="UniProtKB"/>
</dbReference>
<dbReference type="GO" id="GO:0090443">
    <property type="term" value="C:FAR/SIN/STRIPAK complex"/>
    <property type="evidence" value="ECO:0000250"/>
    <property type="project" value="UniProtKB"/>
</dbReference>
<dbReference type="GO" id="GO:0051721">
    <property type="term" value="F:protein phosphatase 2A binding"/>
    <property type="evidence" value="ECO:0007669"/>
    <property type="project" value="TreeGrafter"/>
</dbReference>
<dbReference type="CDD" id="cd14686">
    <property type="entry name" value="bZIP"/>
    <property type="match status" value="1"/>
</dbReference>
<dbReference type="Gene3D" id="1.25.40.20">
    <property type="entry name" value="Ankyrin repeat-containing domain"/>
    <property type="match status" value="1"/>
</dbReference>
<dbReference type="InterPro" id="IPR002110">
    <property type="entry name" value="Ankyrin_rpt"/>
</dbReference>
<dbReference type="InterPro" id="IPR036770">
    <property type="entry name" value="Ankyrin_rpt-contain_sf"/>
</dbReference>
<dbReference type="InterPro" id="IPR050719">
    <property type="entry name" value="Cortactin-Actin_Reg"/>
</dbReference>
<dbReference type="InterPro" id="IPR019131">
    <property type="entry name" value="Cortactin-binding_p2_N"/>
</dbReference>
<dbReference type="PANTHER" id="PTHR23166:SF9">
    <property type="entry name" value="CTTNBP2 N-TERMINAL-LIKE PROTEIN"/>
    <property type="match status" value="1"/>
</dbReference>
<dbReference type="PANTHER" id="PTHR23166">
    <property type="entry name" value="FILAMIN/GPBP-INTERACTING PROTEIN"/>
    <property type="match status" value="1"/>
</dbReference>
<dbReference type="Pfam" id="PF25408">
    <property type="entry name" value="AAA_lid_NAV1"/>
    <property type="match status" value="1"/>
</dbReference>
<dbReference type="Pfam" id="PF00023">
    <property type="entry name" value="Ank"/>
    <property type="match status" value="2"/>
</dbReference>
<dbReference type="Pfam" id="PF12796">
    <property type="entry name" value="Ank_2"/>
    <property type="match status" value="1"/>
</dbReference>
<dbReference type="Pfam" id="PF09727">
    <property type="entry name" value="CortBP2"/>
    <property type="match status" value="1"/>
</dbReference>
<dbReference type="SMART" id="SM00248">
    <property type="entry name" value="ANK"/>
    <property type="match status" value="6"/>
</dbReference>
<dbReference type="SUPFAM" id="SSF48403">
    <property type="entry name" value="Ankyrin repeat"/>
    <property type="match status" value="1"/>
</dbReference>
<dbReference type="PROSITE" id="PS50297">
    <property type="entry name" value="ANK_REP_REGION"/>
    <property type="match status" value="1"/>
</dbReference>
<dbReference type="PROSITE" id="PS50088">
    <property type="entry name" value="ANK_REPEAT"/>
    <property type="match status" value="4"/>
</dbReference>
<name>CTTB2_DASNO</name>
<keyword id="KW-0040">ANK repeat</keyword>
<keyword id="KW-0966">Cell projection</keyword>
<keyword id="KW-0175">Coiled coil</keyword>
<keyword id="KW-0963">Cytoplasm</keyword>
<keyword id="KW-0488">Methylation</keyword>
<keyword id="KW-0597">Phosphoprotein</keyword>
<keyword id="KW-0677">Repeat</keyword>
<keyword id="KW-0770">Synapse</keyword>
<comment type="function">
    <text evidence="2">Regulates the dendritic spine distribution of CTTN/cortactin in hippocampal neurons, and thus controls dendritic spinogenesis and dendritic spine maintenance. Associates with the striatin-interacting phosphatase and kinase (STRIPAK) core complex to regulate dendritic spine distribution of the STRIPAK complex in hippocampal neurons.</text>
</comment>
<comment type="subunit">
    <text evidence="2">Interacts with CTTN/cortactin SH3 domain. Interacts with STRN, STRN4/zinedin and MOB4/phocein; this interactions mediate the association with the STRIPAK core complex and may regulate dendritic spine distribution of the STRIPAK complex in hippocampal neurons. Activation of glutamate receptors weakens the interaction with STRN and STRN4.</text>
</comment>
<comment type="subcellular location">
    <subcellularLocation>
        <location evidence="1">Cytoplasm</location>
        <location evidence="1">Cell cortex</location>
    </subcellularLocation>
    <subcellularLocation>
        <location evidence="2">Cell projection</location>
        <location evidence="2">Dendritic spine</location>
    </subcellularLocation>
    <text evidence="2">Remains associated with dendritic spines even after glutamate stimulation.</text>
</comment>
<protein>
    <recommendedName>
        <fullName>Cortactin-binding protein 2</fullName>
        <shortName>CortBP2</shortName>
    </recommendedName>
</protein>
<reference key="1">
    <citation type="submission" date="2006-09" db="EMBL/GenBank/DDBJ databases">
        <title>NISC comparative sequencing initiative.</title>
        <authorList>
            <person name="Antonellis A."/>
            <person name="Ayele K."/>
            <person name="Benjamin B."/>
            <person name="Blakesley R.W."/>
            <person name="Boakye A."/>
            <person name="Bouffard G.G."/>
            <person name="Brinkley C."/>
            <person name="Brooks S."/>
            <person name="Chu G."/>
            <person name="Coleman H."/>
            <person name="Engle J."/>
            <person name="Gestole M."/>
            <person name="Greene A."/>
            <person name="Guan X."/>
            <person name="Gupta J."/>
            <person name="Haghighi P."/>
            <person name="Han J."/>
            <person name="Hansen N."/>
            <person name="Ho S.-L."/>
            <person name="Hu P."/>
            <person name="Hunter G."/>
            <person name="Hurle B."/>
            <person name="Idol J.R."/>
            <person name="Kwong P."/>
            <person name="Laric P."/>
            <person name="Larson S."/>
            <person name="Lee-Lin S.-Q."/>
            <person name="Legaspi R."/>
            <person name="Madden M."/>
            <person name="Maduro Q.L."/>
            <person name="Maduro V.B."/>
            <person name="Margulies E.H."/>
            <person name="Masiello C."/>
            <person name="Maskeri B."/>
            <person name="McDowell J."/>
            <person name="Mojidi H.A."/>
            <person name="Mullikin J.C."/>
            <person name="Oestreicher J.S."/>
            <person name="Park M."/>
            <person name="Portnoy M.E."/>
            <person name="Prasad A."/>
            <person name="Puri O."/>
            <person name="Reddix-Dugue N."/>
            <person name="Schandler K."/>
            <person name="Schueler M.G."/>
            <person name="Sison C."/>
            <person name="Stantripop S."/>
            <person name="Stephen E."/>
            <person name="Taye A."/>
            <person name="Thomas J.W."/>
            <person name="Thomas P.J."/>
            <person name="Tsipouri V."/>
            <person name="Ung L."/>
            <person name="Vogt J.L."/>
            <person name="Wetherby K.D."/>
            <person name="Young A."/>
            <person name="Green E.D."/>
        </authorList>
    </citation>
    <scope>NUCLEOTIDE SEQUENCE [LARGE SCALE GENOMIC DNA]</scope>
</reference>
<feature type="chain" id="PRO_0000260404" description="Cortactin-binding protein 2">
    <location>
        <begin position="1"/>
        <end position="1665"/>
    </location>
</feature>
<feature type="repeat" description="ANK 1">
    <location>
        <begin position="711"/>
        <end position="741"/>
    </location>
</feature>
<feature type="repeat" description="ANK 2">
    <location>
        <begin position="745"/>
        <end position="774"/>
    </location>
</feature>
<feature type="repeat" description="ANK 3">
    <location>
        <begin position="778"/>
        <end position="807"/>
    </location>
</feature>
<feature type="repeat" description="ANK 4">
    <location>
        <begin position="811"/>
        <end position="840"/>
    </location>
</feature>
<feature type="repeat" description="ANK 5">
    <location>
        <begin position="844"/>
        <end position="873"/>
    </location>
</feature>
<feature type="repeat" description="ANK 6">
    <location>
        <begin position="914"/>
        <end position="944"/>
    </location>
</feature>
<feature type="region of interest" description="Disordered" evidence="5">
    <location>
        <begin position="203"/>
        <end position="222"/>
    </location>
</feature>
<feature type="region of interest" description="Disordered" evidence="5">
    <location>
        <begin position="368"/>
        <end position="480"/>
    </location>
</feature>
<feature type="region of interest" description="Disordered" evidence="5">
    <location>
        <begin position="500"/>
        <end position="620"/>
    </location>
</feature>
<feature type="region of interest" description="Disordered" evidence="5">
    <location>
        <begin position="875"/>
        <end position="902"/>
    </location>
</feature>
<feature type="region of interest" description="Disordered" evidence="5">
    <location>
        <begin position="1447"/>
        <end position="1495"/>
    </location>
</feature>
<feature type="region of interest" description="Disordered" evidence="5">
    <location>
        <begin position="1575"/>
        <end position="1665"/>
    </location>
</feature>
<feature type="coiled-coil region" evidence="4">
    <location>
        <begin position="120"/>
        <end position="277"/>
    </location>
</feature>
<feature type="compositionally biased region" description="Polar residues" evidence="5">
    <location>
        <begin position="388"/>
        <end position="399"/>
    </location>
</feature>
<feature type="compositionally biased region" description="Polar residues" evidence="5">
    <location>
        <begin position="410"/>
        <end position="429"/>
    </location>
</feature>
<feature type="compositionally biased region" description="Low complexity" evidence="5">
    <location>
        <begin position="455"/>
        <end position="469"/>
    </location>
</feature>
<feature type="compositionally biased region" description="Polar residues" evidence="5">
    <location>
        <begin position="470"/>
        <end position="480"/>
    </location>
</feature>
<feature type="compositionally biased region" description="Low complexity" evidence="5">
    <location>
        <begin position="1590"/>
        <end position="1604"/>
    </location>
</feature>
<feature type="compositionally biased region" description="Low complexity" evidence="5">
    <location>
        <begin position="1623"/>
        <end position="1641"/>
    </location>
</feature>
<feature type="compositionally biased region" description="Polar residues" evidence="5">
    <location>
        <begin position="1656"/>
        <end position="1665"/>
    </location>
</feature>
<feature type="modified residue" description="Asymmetric dimethylarginine" evidence="1">
    <location>
        <position position="500"/>
    </location>
</feature>
<feature type="modified residue" description="Phosphoserine" evidence="3">
    <location>
        <position position="1526"/>
    </location>
</feature>
<gene>
    <name type="primary">CTTNBP2</name>
    <name type="synonym">CORTBP2</name>
</gene>